<sequence>MDSSQYRLKATLTQLCLCSRGVRNVTSEHPEQQDSSLTLWRPWLLRAGDRELDGQQRRLGEADGDHRNTGPKGALGFQHPVRLYMPKSKTSEYLQHMGKKVLANFPVQATIHFYNDDSDSEEEEEDDEMEFYNYYQNCAANGVNSSRGSGDNYSVPGGPKRNISSHTGSA</sequence>
<comment type="function">
    <text evidence="1">Acts as a transcriptional corepressor. Negative regulator of the transcriptional activity of tbx1 that plays a key role in pharyngeal development. Plays a role in the formation of the anteroposterior (AP) axis during embryonic development; required to establish the posterolateral border of the pre-placodal ectoderm (PPE) acting downstream of the retinoic acid receptor (RAR) signaling (By similarity).</text>
</comment>
<comment type="subunit">
    <text evidence="2">Interacts with tbx1 and tle4/grg4.</text>
</comment>
<comment type="subcellular location">
    <subcellularLocation>
        <location evidence="2">Nucleus</location>
    </subcellularLocation>
</comment>
<comment type="domain">
    <text evidence="1">The Ripply homology domain and the WRPW motif are both necessary for its transcriptional corepressor activity on the transcription activator tbx1.</text>
</comment>
<comment type="domain">
    <text evidence="3">The WRPW motif is required for binding to tle/groucho proteins.</text>
</comment>
<comment type="similarity">
    <text evidence="4">Belongs to the ripply family.</text>
</comment>
<protein>
    <recommendedName>
        <fullName evidence="2">Protein ripply3</fullName>
    </recommendedName>
    <alternativeName>
        <fullName>Down syndrome critical region protein 6 homolog</fullName>
    </alternativeName>
</protein>
<feature type="chain" id="PRO_0000401113" description="Protein ripply3">
    <location>
        <begin position="1"/>
        <end position="170"/>
    </location>
</feature>
<feature type="region of interest" description="Ripply homology domain" evidence="4">
    <location>
        <begin position="79"/>
        <end position="114"/>
    </location>
</feature>
<feature type="region of interest" description="Disordered" evidence="5">
    <location>
        <begin position="143"/>
        <end position="170"/>
    </location>
</feature>
<feature type="short sequence motif" description="WRPW motif" evidence="4">
    <location>
        <begin position="40"/>
        <end position="43"/>
    </location>
</feature>
<feature type="compositionally biased region" description="Polar residues" evidence="5">
    <location>
        <begin position="143"/>
        <end position="152"/>
    </location>
</feature>
<evidence type="ECO:0000250" key="1"/>
<evidence type="ECO:0000250" key="2">
    <source>
        <dbReference type="UniProtKB" id="B7XDF1"/>
    </source>
</evidence>
<evidence type="ECO:0000250" key="3">
    <source>
        <dbReference type="UniProtKB" id="Q25QX6"/>
    </source>
</evidence>
<evidence type="ECO:0000255" key="4"/>
<evidence type="ECO:0000256" key="5">
    <source>
        <dbReference type="SAM" id="MobiDB-lite"/>
    </source>
</evidence>
<evidence type="ECO:0000312" key="6">
    <source>
        <dbReference type="EMBL" id="AAI61333.1"/>
    </source>
</evidence>
<evidence type="ECO:0000312" key="7">
    <source>
        <dbReference type="Xenbase" id="XB-GENE-6257661"/>
    </source>
</evidence>
<organism>
    <name type="scientific">Xenopus tropicalis</name>
    <name type="common">Western clawed frog</name>
    <name type="synonym">Silurana tropicalis</name>
    <dbReference type="NCBI Taxonomy" id="8364"/>
    <lineage>
        <taxon>Eukaryota</taxon>
        <taxon>Metazoa</taxon>
        <taxon>Chordata</taxon>
        <taxon>Craniata</taxon>
        <taxon>Vertebrata</taxon>
        <taxon>Euteleostomi</taxon>
        <taxon>Amphibia</taxon>
        <taxon>Batrachia</taxon>
        <taxon>Anura</taxon>
        <taxon>Pipoidea</taxon>
        <taxon>Pipidae</taxon>
        <taxon>Xenopodinae</taxon>
        <taxon>Xenopus</taxon>
        <taxon>Silurana</taxon>
    </lineage>
</organism>
<dbReference type="EMBL" id="BC161333">
    <property type="protein sequence ID" value="AAI61333.1"/>
    <property type="molecule type" value="mRNA"/>
</dbReference>
<dbReference type="RefSeq" id="NP_001120477.1">
    <property type="nucleotide sequence ID" value="NM_001127005.1"/>
</dbReference>
<dbReference type="PaxDb" id="8364-ENSXETP00000028543"/>
<dbReference type="GeneID" id="100145593"/>
<dbReference type="KEGG" id="xtr:100145593"/>
<dbReference type="AGR" id="Xenbase:XB-GENE-6257661"/>
<dbReference type="CTD" id="53820"/>
<dbReference type="Xenbase" id="XB-GENE-6257661">
    <property type="gene designation" value="ripply3"/>
</dbReference>
<dbReference type="eggNOG" id="ENOG502S482">
    <property type="taxonomic scope" value="Eukaryota"/>
</dbReference>
<dbReference type="InParanoid" id="B1H3B4"/>
<dbReference type="OMA" id="WMMTARD"/>
<dbReference type="OrthoDB" id="9905973at2759"/>
<dbReference type="Proteomes" id="UP000008143">
    <property type="component" value="Chromosome 2"/>
</dbReference>
<dbReference type="GO" id="GO:0005634">
    <property type="term" value="C:nucleus"/>
    <property type="evidence" value="ECO:0007669"/>
    <property type="project" value="UniProtKB-SubCell"/>
</dbReference>
<dbReference type="GO" id="GO:0003712">
    <property type="term" value="F:transcription coregulator activity"/>
    <property type="evidence" value="ECO:0000250"/>
    <property type="project" value="UniProtKB"/>
</dbReference>
<dbReference type="GO" id="GO:0009948">
    <property type="term" value="P:anterior/posterior axis specification"/>
    <property type="evidence" value="ECO:0000250"/>
    <property type="project" value="UniProtKB"/>
</dbReference>
<dbReference type="GO" id="GO:0071300">
    <property type="term" value="P:cellular response to retinoic acid"/>
    <property type="evidence" value="ECO:0000250"/>
    <property type="project" value="UniProtKB"/>
</dbReference>
<dbReference type="GO" id="GO:0060788">
    <property type="term" value="P:ectodermal placode formation"/>
    <property type="evidence" value="ECO:0000250"/>
    <property type="project" value="UniProtKB"/>
</dbReference>
<dbReference type="GO" id="GO:0000122">
    <property type="term" value="P:negative regulation of transcription by RNA polymerase II"/>
    <property type="evidence" value="ECO:0000250"/>
    <property type="project" value="UniProtKB"/>
</dbReference>
<dbReference type="InterPro" id="IPR028127">
    <property type="entry name" value="Ripply_fam"/>
</dbReference>
<dbReference type="PANTHER" id="PTHR16770">
    <property type="entry name" value="PROTEIN RIPPLY-LIKE"/>
    <property type="match status" value="1"/>
</dbReference>
<dbReference type="PANTHER" id="PTHR16770:SF4">
    <property type="entry name" value="PROTEIN RIPPLY3"/>
    <property type="match status" value="1"/>
</dbReference>
<dbReference type="Pfam" id="PF14998">
    <property type="entry name" value="Ripply"/>
    <property type="match status" value="1"/>
</dbReference>
<reference evidence="6" key="1">
    <citation type="submission" date="2008-03" db="EMBL/GenBank/DDBJ databases">
        <authorList>
            <consortium name="NIH - Xenopus Gene Collection (XGC) project"/>
        </authorList>
    </citation>
    <scope>NUCLEOTIDE SEQUENCE [LARGE SCALE MRNA]</scope>
    <source>
        <tissue evidence="6">Tadpole</tissue>
    </source>
</reference>
<keyword id="KW-0217">Developmental protein</keyword>
<keyword id="KW-0539">Nucleus</keyword>
<keyword id="KW-1185">Reference proteome</keyword>
<keyword id="KW-0678">Repressor</keyword>
<keyword id="KW-0804">Transcription</keyword>
<keyword id="KW-0805">Transcription regulation</keyword>
<proteinExistence type="evidence at transcript level"/>
<accession>B1H3B4</accession>
<name>DSCR6_XENTR</name>
<gene>
    <name evidence="7" type="primary">dscr6</name>
    <name evidence="2" type="synonym">ripply3</name>
</gene>